<evidence type="ECO:0000255" key="1">
    <source>
        <dbReference type="HAMAP-Rule" id="MF_00380"/>
    </source>
</evidence>
<sequence length="113" mass="12354">MTGTGKTVTRVDLCEAVYQKVGLSRTESSAFVELVLKEITDCLEKGETVKLSSFGSFMVRQKGQRIGRNPKTGTEVPISPRRVMVFKPSAILKQRINGQANGSMSNSDQAETD</sequence>
<organism>
    <name type="scientific">Rhodopseudomonas palustris (strain BisA53)</name>
    <dbReference type="NCBI Taxonomy" id="316055"/>
    <lineage>
        <taxon>Bacteria</taxon>
        <taxon>Pseudomonadati</taxon>
        <taxon>Pseudomonadota</taxon>
        <taxon>Alphaproteobacteria</taxon>
        <taxon>Hyphomicrobiales</taxon>
        <taxon>Nitrobacteraceae</taxon>
        <taxon>Rhodopseudomonas</taxon>
    </lineage>
</organism>
<gene>
    <name evidence="1" type="primary">ihfA</name>
    <name evidence="1" type="synonym">himA</name>
    <name type="ordered locus">RPE_2827</name>
</gene>
<reference key="1">
    <citation type="submission" date="2006-09" db="EMBL/GenBank/DDBJ databases">
        <title>Complete sequence of Rhodopseudomonas palustris BisA53.</title>
        <authorList>
            <consortium name="US DOE Joint Genome Institute"/>
            <person name="Copeland A."/>
            <person name="Lucas S."/>
            <person name="Lapidus A."/>
            <person name="Barry K."/>
            <person name="Detter J.C."/>
            <person name="Glavina del Rio T."/>
            <person name="Hammon N."/>
            <person name="Israni S."/>
            <person name="Dalin E."/>
            <person name="Tice H."/>
            <person name="Pitluck S."/>
            <person name="Chain P."/>
            <person name="Malfatti S."/>
            <person name="Shin M."/>
            <person name="Vergez L."/>
            <person name="Schmutz J."/>
            <person name="Larimer F."/>
            <person name="Land M."/>
            <person name="Hauser L."/>
            <person name="Pelletier D.A."/>
            <person name="Kyrpides N."/>
            <person name="Kim E."/>
            <person name="Harwood C.S."/>
            <person name="Oda Y."/>
            <person name="Richardson P."/>
        </authorList>
    </citation>
    <scope>NUCLEOTIDE SEQUENCE [LARGE SCALE GENOMIC DNA]</scope>
    <source>
        <strain>BisA53</strain>
    </source>
</reference>
<comment type="function">
    <text evidence="1">This protein is one of the two subunits of integration host factor, a specific DNA-binding protein that functions in genetic recombination as well as in transcriptional and translational control.</text>
</comment>
<comment type="subunit">
    <text evidence="1">Heterodimer of an alpha and a beta chain.</text>
</comment>
<comment type="similarity">
    <text evidence="1">Belongs to the bacterial histone-like protein family.</text>
</comment>
<protein>
    <recommendedName>
        <fullName evidence="1">Integration host factor subunit alpha</fullName>
        <shortName evidence="1">IHF-alpha</shortName>
    </recommendedName>
</protein>
<keyword id="KW-0233">DNA recombination</keyword>
<keyword id="KW-0238">DNA-binding</keyword>
<keyword id="KW-0804">Transcription</keyword>
<keyword id="KW-0805">Transcription regulation</keyword>
<keyword id="KW-0810">Translation regulation</keyword>
<dbReference type="EMBL" id="CP000463">
    <property type="protein sequence ID" value="ABJ06764.1"/>
    <property type="molecule type" value="Genomic_DNA"/>
</dbReference>
<dbReference type="SMR" id="Q07MS0"/>
<dbReference type="STRING" id="316055.RPE_2827"/>
<dbReference type="KEGG" id="rpe:RPE_2827"/>
<dbReference type="eggNOG" id="COG0776">
    <property type="taxonomic scope" value="Bacteria"/>
</dbReference>
<dbReference type="HOGENOM" id="CLU_105066_1_1_5"/>
<dbReference type="OrthoDB" id="9797747at2"/>
<dbReference type="GO" id="GO:0005829">
    <property type="term" value="C:cytosol"/>
    <property type="evidence" value="ECO:0007669"/>
    <property type="project" value="TreeGrafter"/>
</dbReference>
<dbReference type="GO" id="GO:0003677">
    <property type="term" value="F:DNA binding"/>
    <property type="evidence" value="ECO:0007669"/>
    <property type="project" value="UniProtKB-UniRule"/>
</dbReference>
<dbReference type="GO" id="GO:0030527">
    <property type="term" value="F:structural constituent of chromatin"/>
    <property type="evidence" value="ECO:0007669"/>
    <property type="project" value="InterPro"/>
</dbReference>
<dbReference type="GO" id="GO:0006310">
    <property type="term" value="P:DNA recombination"/>
    <property type="evidence" value="ECO:0007669"/>
    <property type="project" value="UniProtKB-UniRule"/>
</dbReference>
<dbReference type="GO" id="GO:0009893">
    <property type="term" value="P:positive regulation of metabolic process"/>
    <property type="evidence" value="ECO:0007669"/>
    <property type="project" value="UniProtKB-ARBA"/>
</dbReference>
<dbReference type="GO" id="GO:0006355">
    <property type="term" value="P:regulation of DNA-templated transcription"/>
    <property type="evidence" value="ECO:0007669"/>
    <property type="project" value="UniProtKB-UniRule"/>
</dbReference>
<dbReference type="GO" id="GO:0006417">
    <property type="term" value="P:regulation of translation"/>
    <property type="evidence" value="ECO:0007669"/>
    <property type="project" value="UniProtKB-UniRule"/>
</dbReference>
<dbReference type="CDD" id="cd13835">
    <property type="entry name" value="IHF_A"/>
    <property type="match status" value="1"/>
</dbReference>
<dbReference type="FunFam" id="4.10.520.10:FF:000010">
    <property type="entry name" value="Integration host factor subunit alpha"/>
    <property type="match status" value="1"/>
</dbReference>
<dbReference type="Gene3D" id="4.10.520.10">
    <property type="entry name" value="IHF-like DNA-binding proteins"/>
    <property type="match status" value="1"/>
</dbReference>
<dbReference type="HAMAP" id="MF_00380">
    <property type="entry name" value="IHF_alpha"/>
    <property type="match status" value="1"/>
</dbReference>
<dbReference type="InterPro" id="IPR000119">
    <property type="entry name" value="Hist_DNA-bd"/>
</dbReference>
<dbReference type="InterPro" id="IPR020816">
    <property type="entry name" value="Histone-like_DNA-bd_CS"/>
</dbReference>
<dbReference type="InterPro" id="IPR010992">
    <property type="entry name" value="IHF-like_DNA-bd_dom_sf"/>
</dbReference>
<dbReference type="InterPro" id="IPR005684">
    <property type="entry name" value="IHF_alpha"/>
</dbReference>
<dbReference type="NCBIfam" id="TIGR00987">
    <property type="entry name" value="himA"/>
    <property type="match status" value="1"/>
</dbReference>
<dbReference type="NCBIfam" id="NF001401">
    <property type="entry name" value="PRK00285.1"/>
    <property type="match status" value="1"/>
</dbReference>
<dbReference type="PANTHER" id="PTHR33175">
    <property type="entry name" value="DNA-BINDING PROTEIN HU"/>
    <property type="match status" value="1"/>
</dbReference>
<dbReference type="PANTHER" id="PTHR33175:SF2">
    <property type="entry name" value="INTEGRATION HOST FACTOR SUBUNIT ALPHA"/>
    <property type="match status" value="1"/>
</dbReference>
<dbReference type="Pfam" id="PF00216">
    <property type="entry name" value="Bac_DNA_binding"/>
    <property type="match status" value="1"/>
</dbReference>
<dbReference type="PRINTS" id="PR01727">
    <property type="entry name" value="DNABINDINGHU"/>
</dbReference>
<dbReference type="SMART" id="SM00411">
    <property type="entry name" value="BHL"/>
    <property type="match status" value="1"/>
</dbReference>
<dbReference type="SUPFAM" id="SSF47729">
    <property type="entry name" value="IHF-like DNA-binding proteins"/>
    <property type="match status" value="1"/>
</dbReference>
<dbReference type="PROSITE" id="PS00045">
    <property type="entry name" value="HISTONE_LIKE"/>
    <property type="match status" value="1"/>
</dbReference>
<accession>Q07MS0</accession>
<proteinExistence type="inferred from homology"/>
<name>IHFA_RHOP5</name>
<feature type="chain" id="PRO_0000277768" description="Integration host factor subunit alpha">
    <location>
        <begin position="1"/>
        <end position="113"/>
    </location>
</feature>